<sequence>KEGYIVDYHTGCKYTCAKLGDNDYCVRECRLRYYQSAHGYCYAFACWCTHLYEAAVVWPLPNKRCK</sequence>
<name>SCX29_CENHI</name>
<keyword id="KW-0027">Amidation</keyword>
<keyword id="KW-0903">Direct protein sequencing</keyword>
<keyword id="KW-1015">Disulfide bond</keyword>
<keyword id="KW-0872">Ion channel impairing toxin</keyword>
<keyword id="KW-0528">Neurotoxin</keyword>
<keyword id="KW-0964">Secreted</keyword>
<keyword id="KW-0800">Toxin</keyword>
<keyword id="KW-0738">Voltage-gated sodium channel impairing toxin</keyword>
<comment type="function">
    <text evidence="2">Beta toxins bind voltage independently at site-4 of sodium channels (Nav) and shift the activation voltage toward more negative potentials, thereby affecting sodium channel activation CC and promoting spontaneous and repetitive firing.</text>
</comment>
<comment type="subcellular location">
    <subcellularLocation>
        <location evidence="4">Secreted</location>
    </subcellularLocation>
</comment>
<comment type="tissue specificity">
    <text evidence="7">Expressed by the venom gland.</text>
</comment>
<comment type="domain">
    <text evidence="6">Has the structural arrangement of an alpha-helix connected to antiparallel beta-sheets by disulfide bonds (CS-alpha/beta).</text>
</comment>
<comment type="mass spectrometry"/>
<comment type="similarity">
    <text evidence="6">Belongs to the long (4 C-C) scorpion toxin superfamily. Sodium channel inhibitor family. Beta subfamily.</text>
</comment>
<protein>
    <recommendedName>
        <fullName evidence="5">Beta-toxin ChFII.9</fullName>
    </recommendedName>
</protein>
<feature type="chain" id="PRO_0000462140" description="Beta-toxin ChFII.9">
    <location>
        <begin position="1"/>
        <end position="66"/>
    </location>
</feature>
<feature type="domain" description="LCN-type CS-alpha/beta" evidence="3">
    <location>
        <begin position="1"/>
        <end position="66"/>
    </location>
</feature>
<feature type="modified residue" description="Lysine amide" evidence="1">
    <location>
        <position position="66"/>
    </location>
</feature>
<feature type="disulfide bond" evidence="3">
    <location>
        <begin position="12"/>
        <end position="65"/>
    </location>
</feature>
<feature type="disulfide bond" evidence="3">
    <location>
        <begin position="16"/>
        <end position="41"/>
    </location>
</feature>
<feature type="disulfide bond" evidence="3">
    <location>
        <begin position="25"/>
        <end position="46"/>
    </location>
</feature>
<feature type="disulfide bond" evidence="3">
    <location>
        <begin position="29"/>
        <end position="48"/>
    </location>
</feature>
<reference evidence="6" key="1">
    <citation type="submission" date="2024-06" db="UniProtKB">
        <title>Beta toxins isolated from Centruroides hirsutipalpus affect the sodium channel activation and promote spontaneous and repetitive firing.</title>
        <authorList>
            <person name="Valdez-Velazquez L."/>
            <person name="Olamendi-Portugal T."/>
            <person name="Possani L."/>
            <person name="Jimenez-Vargas J."/>
        </authorList>
    </citation>
    <scope>PROTEIN SEQUENCE</scope>
    <scope>SUBCELLULAR LOCATION</scope>
    <scope>TISSUE SPECIFICITY</scope>
    <scope>MASS SPECTROMETRY</scope>
</reference>
<dbReference type="CDD" id="cd23106">
    <property type="entry name" value="neurotoxins_LC_scorpion"/>
    <property type="match status" value="1"/>
</dbReference>
<dbReference type="Gene3D" id="3.30.30.10">
    <property type="entry name" value="Knottin, scorpion toxin-like"/>
    <property type="match status" value="1"/>
</dbReference>
<dbReference type="InterPro" id="IPR044062">
    <property type="entry name" value="LCN-type_CS_alpha_beta_dom"/>
</dbReference>
<dbReference type="InterPro" id="IPR003614">
    <property type="entry name" value="Scorpion_toxin-like"/>
</dbReference>
<dbReference type="InterPro" id="IPR036574">
    <property type="entry name" value="Scorpion_toxin-like_sf"/>
</dbReference>
<dbReference type="InterPro" id="IPR018218">
    <property type="entry name" value="Scorpion_toxinL"/>
</dbReference>
<dbReference type="InterPro" id="IPR002061">
    <property type="entry name" value="Scorpion_toxinL/defensin"/>
</dbReference>
<dbReference type="Pfam" id="PF00537">
    <property type="entry name" value="Toxin_3"/>
    <property type="match status" value="1"/>
</dbReference>
<dbReference type="PRINTS" id="PR00285">
    <property type="entry name" value="SCORPNTOXIN"/>
</dbReference>
<dbReference type="SMART" id="SM00505">
    <property type="entry name" value="Knot1"/>
    <property type="match status" value="1"/>
</dbReference>
<dbReference type="SUPFAM" id="SSF57095">
    <property type="entry name" value="Scorpion toxin-like"/>
    <property type="match status" value="1"/>
</dbReference>
<dbReference type="PROSITE" id="PS51863">
    <property type="entry name" value="LCN_CSAB"/>
    <property type="match status" value="1"/>
</dbReference>
<evidence type="ECO:0000250" key="1">
    <source>
        <dbReference type="UniProtKB" id="C0HK69"/>
    </source>
</evidence>
<evidence type="ECO:0000250" key="2">
    <source>
        <dbReference type="UniProtKB" id="P60266"/>
    </source>
</evidence>
<evidence type="ECO:0000255" key="3">
    <source>
        <dbReference type="PROSITE-ProRule" id="PRU01210"/>
    </source>
</evidence>
<evidence type="ECO:0000269" key="4">
    <source ref="1"/>
</evidence>
<evidence type="ECO:0000303" key="5">
    <source ref="1"/>
</evidence>
<evidence type="ECO:0000305" key="6"/>
<evidence type="ECO:0000305" key="7">
    <source ref="1"/>
</evidence>
<proteinExistence type="evidence at protein level"/>
<organism>
    <name type="scientific">Centruroides hirsutipalpus</name>
    <name type="common">Scorpion</name>
    <dbReference type="NCBI Taxonomy" id="2653061"/>
    <lineage>
        <taxon>Eukaryota</taxon>
        <taxon>Metazoa</taxon>
        <taxon>Ecdysozoa</taxon>
        <taxon>Arthropoda</taxon>
        <taxon>Chelicerata</taxon>
        <taxon>Arachnida</taxon>
        <taxon>Scorpiones</taxon>
        <taxon>Buthida</taxon>
        <taxon>Buthoidea</taxon>
        <taxon>Buthidae</taxon>
        <taxon>Centruroides</taxon>
    </lineage>
</organism>
<accession>C0HMC6</accession>